<organism>
    <name type="scientific">Shewanella sp. (strain ANA-3)</name>
    <dbReference type="NCBI Taxonomy" id="94122"/>
    <lineage>
        <taxon>Bacteria</taxon>
        <taxon>Pseudomonadati</taxon>
        <taxon>Pseudomonadota</taxon>
        <taxon>Gammaproteobacteria</taxon>
        <taxon>Alteromonadales</taxon>
        <taxon>Shewanellaceae</taxon>
        <taxon>Shewanella</taxon>
    </lineage>
</organism>
<feature type="chain" id="PRO_1000007351" description="Large ribosomal subunit protein bL28">
    <location>
        <begin position="1"/>
        <end position="78"/>
    </location>
</feature>
<feature type="region of interest" description="Disordered" evidence="2">
    <location>
        <begin position="1"/>
        <end position="21"/>
    </location>
</feature>
<evidence type="ECO:0000255" key="1">
    <source>
        <dbReference type="HAMAP-Rule" id="MF_00373"/>
    </source>
</evidence>
<evidence type="ECO:0000256" key="2">
    <source>
        <dbReference type="SAM" id="MobiDB-lite"/>
    </source>
</evidence>
<evidence type="ECO:0000305" key="3"/>
<accession>A0L1R8</accession>
<protein>
    <recommendedName>
        <fullName evidence="1">Large ribosomal subunit protein bL28</fullName>
    </recommendedName>
    <alternativeName>
        <fullName evidence="3">50S ribosomal protein L28</fullName>
    </alternativeName>
</protein>
<proteinExistence type="inferred from homology"/>
<comment type="similarity">
    <text evidence="1">Belongs to the bacterial ribosomal protein bL28 family.</text>
</comment>
<reference key="1">
    <citation type="submission" date="2006-09" db="EMBL/GenBank/DDBJ databases">
        <title>Complete sequence of chromosome 1 of Shewanella sp. ANA-3.</title>
        <authorList>
            <person name="Copeland A."/>
            <person name="Lucas S."/>
            <person name="Lapidus A."/>
            <person name="Barry K."/>
            <person name="Detter J.C."/>
            <person name="Glavina del Rio T."/>
            <person name="Hammon N."/>
            <person name="Israni S."/>
            <person name="Dalin E."/>
            <person name="Tice H."/>
            <person name="Pitluck S."/>
            <person name="Chertkov O."/>
            <person name="Brettin T."/>
            <person name="Bruce D."/>
            <person name="Han C."/>
            <person name="Tapia R."/>
            <person name="Gilna P."/>
            <person name="Schmutz J."/>
            <person name="Larimer F."/>
            <person name="Land M."/>
            <person name="Hauser L."/>
            <person name="Kyrpides N."/>
            <person name="Kim E."/>
            <person name="Newman D."/>
            <person name="Salticov C."/>
            <person name="Konstantinidis K."/>
            <person name="Klappenback J."/>
            <person name="Tiedje J."/>
            <person name="Richardson P."/>
        </authorList>
    </citation>
    <scope>NUCLEOTIDE SEQUENCE [LARGE SCALE GENOMIC DNA]</scope>
    <source>
        <strain>ANA-3</strain>
    </source>
</reference>
<sequence length="78" mass="9113">MSRVCQVTGKKPMVGNNRSHAKNATRRRFLPNLQNHRFWLEEEKRFVQLRVSTKGIRLIDKKGIEVVVAELRARGEKV</sequence>
<gene>
    <name evidence="1" type="primary">rpmB</name>
    <name type="ordered locus">Shewana3_3769</name>
</gene>
<name>RL28_SHESA</name>
<keyword id="KW-0687">Ribonucleoprotein</keyword>
<keyword id="KW-0689">Ribosomal protein</keyword>
<dbReference type="EMBL" id="CP000469">
    <property type="protein sequence ID" value="ABK49987.1"/>
    <property type="molecule type" value="Genomic_DNA"/>
</dbReference>
<dbReference type="RefSeq" id="WP_006079870.1">
    <property type="nucleotide sequence ID" value="NC_008577.1"/>
</dbReference>
<dbReference type="SMR" id="A0L1R8"/>
<dbReference type="STRING" id="94122.Shewana3_3769"/>
<dbReference type="GeneID" id="94729700"/>
<dbReference type="KEGG" id="shn:Shewana3_3769"/>
<dbReference type="eggNOG" id="COG0227">
    <property type="taxonomic scope" value="Bacteria"/>
</dbReference>
<dbReference type="HOGENOM" id="CLU_064548_3_1_6"/>
<dbReference type="OrthoDB" id="9805609at2"/>
<dbReference type="Proteomes" id="UP000002589">
    <property type="component" value="Chromosome"/>
</dbReference>
<dbReference type="GO" id="GO:0022625">
    <property type="term" value="C:cytosolic large ribosomal subunit"/>
    <property type="evidence" value="ECO:0007669"/>
    <property type="project" value="TreeGrafter"/>
</dbReference>
<dbReference type="GO" id="GO:0003735">
    <property type="term" value="F:structural constituent of ribosome"/>
    <property type="evidence" value="ECO:0007669"/>
    <property type="project" value="InterPro"/>
</dbReference>
<dbReference type="GO" id="GO:0006412">
    <property type="term" value="P:translation"/>
    <property type="evidence" value="ECO:0007669"/>
    <property type="project" value="UniProtKB-UniRule"/>
</dbReference>
<dbReference type="FunFam" id="2.30.170.40:FF:000001">
    <property type="entry name" value="50S ribosomal protein L28"/>
    <property type="match status" value="1"/>
</dbReference>
<dbReference type="Gene3D" id="2.30.170.40">
    <property type="entry name" value="Ribosomal protein L28/L24"/>
    <property type="match status" value="1"/>
</dbReference>
<dbReference type="HAMAP" id="MF_00373">
    <property type="entry name" value="Ribosomal_bL28"/>
    <property type="match status" value="1"/>
</dbReference>
<dbReference type="InterPro" id="IPR026569">
    <property type="entry name" value="Ribosomal_bL28"/>
</dbReference>
<dbReference type="InterPro" id="IPR034704">
    <property type="entry name" value="Ribosomal_bL28/bL31-like_sf"/>
</dbReference>
<dbReference type="InterPro" id="IPR001383">
    <property type="entry name" value="Ribosomal_bL28_bact-type"/>
</dbReference>
<dbReference type="InterPro" id="IPR037147">
    <property type="entry name" value="Ribosomal_bL28_sf"/>
</dbReference>
<dbReference type="NCBIfam" id="TIGR00009">
    <property type="entry name" value="L28"/>
    <property type="match status" value="1"/>
</dbReference>
<dbReference type="PANTHER" id="PTHR13528">
    <property type="entry name" value="39S RIBOSOMAL PROTEIN L28, MITOCHONDRIAL"/>
    <property type="match status" value="1"/>
</dbReference>
<dbReference type="PANTHER" id="PTHR13528:SF2">
    <property type="entry name" value="LARGE RIBOSOMAL SUBUNIT PROTEIN BL28M"/>
    <property type="match status" value="1"/>
</dbReference>
<dbReference type="Pfam" id="PF00830">
    <property type="entry name" value="Ribosomal_L28"/>
    <property type="match status" value="1"/>
</dbReference>
<dbReference type="SUPFAM" id="SSF143800">
    <property type="entry name" value="L28p-like"/>
    <property type="match status" value="1"/>
</dbReference>